<evidence type="ECO:0000255" key="1">
    <source>
        <dbReference type="HAMAP-Rule" id="MF_00145"/>
    </source>
</evidence>
<reference key="1">
    <citation type="journal article" date="2004" name="Proc. Natl. Acad. Sci. U.S.A.">
        <title>Comparison of the genome of the oral pathogen Treponema denticola with other spirochete genomes.</title>
        <authorList>
            <person name="Seshadri R."/>
            <person name="Myers G.S.A."/>
            <person name="Tettelin H."/>
            <person name="Eisen J.A."/>
            <person name="Heidelberg J.F."/>
            <person name="Dodson R.J."/>
            <person name="Davidsen T.M."/>
            <person name="DeBoy R.T."/>
            <person name="Fouts D.E."/>
            <person name="Haft D.H."/>
            <person name="Selengut J."/>
            <person name="Ren Q."/>
            <person name="Brinkac L.M."/>
            <person name="Madupu R."/>
            <person name="Kolonay J.F."/>
            <person name="Durkin S.A."/>
            <person name="Daugherty S.C."/>
            <person name="Shetty J."/>
            <person name="Shvartsbeyn A."/>
            <person name="Gebregeorgis E."/>
            <person name="Geer K."/>
            <person name="Tsegaye G."/>
            <person name="Malek J.A."/>
            <person name="Ayodeji B."/>
            <person name="Shatsman S."/>
            <person name="McLeod M.P."/>
            <person name="Smajs D."/>
            <person name="Howell J.K."/>
            <person name="Pal S."/>
            <person name="Amin A."/>
            <person name="Vashisth P."/>
            <person name="McNeill T.Z."/>
            <person name="Xiang Q."/>
            <person name="Sodergren E."/>
            <person name="Baca E."/>
            <person name="Weinstock G.M."/>
            <person name="Norris S.J."/>
            <person name="Fraser C.M."/>
            <person name="Paulsen I.T."/>
        </authorList>
    </citation>
    <scope>NUCLEOTIDE SEQUENCE [LARGE SCALE GENOMIC DNA]</scope>
    <source>
        <strain>ATCC 35405 / DSM 14222 / CIP 103919 / JCM 8153 / KCTC 15104</strain>
    </source>
</reference>
<keyword id="KW-0067">ATP-binding</keyword>
<keyword id="KW-0963">Cytoplasm</keyword>
<keyword id="KW-0324">Glycolysis</keyword>
<keyword id="KW-0418">Kinase</keyword>
<keyword id="KW-0547">Nucleotide-binding</keyword>
<keyword id="KW-1185">Reference proteome</keyword>
<keyword id="KW-0808">Transferase</keyword>
<name>PGK_TREDE</name>
<dbReference type="EC" id="2.7.2.3" evidence="1"/>
<dbReference type="EMBL" id="AE017226">
    <property type="protein sequence ID" value="AAS12230.1"/>
    <property type="molecule type" value="Genomic_DNA"/>
</dbReference>
<dbReference type="RefSeq" id="NP_972319.1">
    <property type="nucleotide sequence ID" value="NC_002967.9"/>
</dbReference>
<dbReference type="RefSeq" id="WP_002679428.1">
    <property type="nucleotide sequence ID" value="NC_002967.9"/>
</dbReference>
<dbReference type="SMR" id="P62421"/>
<dbReference type="STRING" id="243275.TDE_1715"/>
<dbReference type="PaxDb" id="243275-TDE_1715"/>
<dbReference type="GeneID" id="2740887"/>
<dbReference type="KEGG" id="tde:TDE_1715"/>
<dbReference type="PATRIC" id="fig|243275.7.peg.1640"/>
<dbReference type="eggNOG" id="COG0126">
    <property type="taxonomic scope" value="Bacteria"/>
</dbReference>
<dbReference type="HOGENOM" id="CLU_025427_0_2_12"/>
<dbReference type="OrthoDB" id="9808460at2"/>
<dbReference type="UniPathway" id="UPA00109">
    <property type="reaction ID" value="UER00185"/>
</dbReference>
<dbReference type="Proteomes" id="UP000008212">
    <property type="component" value="Chromosome"/>
</dbReference>
<dbReference type="GO" id="GO:0005829">
    <property type="term" value="C:cytosol"/>
    <property type="evidence" value="ECO:0007669"/>
    <property type="project" value="TreeGrafter"/>
</dbReference>
<dbReference type="GO" id="GO:0043531">
    <property type="term" value="F:ADP binding"/>
    <property type="evidence" value="ECO:0007669"/>
    <property type="project" value="TreeGrafter"/>
</dbReference>
<dbReference type="GO" id="GO:0005524">
    <property type="term" value="F:ATP binding"/>
    <property type="evidence" value="ECO:0007669"/>
    <property type="project" value="UniProtKB-KW"/>
</dbReference>
<dbReference type="GO" id="GO:0004618">
    <property type="term" value="F:phosphoglycerate kinase activity"/>
    <property type="evidence" value="ECO:0007669"/>
    <property type="project" value="UniProtKB-UniRule"/>
</dbReference>
<dbReference type="GO" id="GO:0006094">
    <property type="term" value="P:gluconeogenesis"/>
    <property type="evidence" value="ECO:0007669"/>
    <property type="project" value="TreeGrafter"/>
</dbReference>
<dbReference type="GO" id="GO:0006096">
    <property type="term" value="P:glycolytic process"/>
    <property type="evidence" value="ECO:0007669"/>
    <property type="project" value="UniProtKB-UniRule"/>
</dbReference>
<dbReference type="CDD" id="cd00318">
    <property type="entry name" value="Phosphoglycerate_kinase"/>
    <property type="match status" value="1"/>
</dbReference>
<dbReference type="FunFam" id="3.40.50.1260:FF:000005">
    <property type="entry name" value="Phosphoglycerate kinase"/>
    <property type="match status" value="1"/>
</dbReference>
<dbReference type="FunFam" id="3.40.50.1260:FF:000007">
    <property type="entry name" value="Phosphoglycerate kinase"/>
    <property type="match status" value="1"/>
</dbReference>
<dbReference type="Gene3D" id="3.40.50.1260">
    <property type="entry name" value="Phosphoglycerate kinase, N-terminal domain"/>
    <property type="match status" value="2"/>
</dbReference>
<dbReference type="HAMAP" id="MF_00145">
    <property type="entry name" value="Phosphoglyc_kinase"/>
    <property type="match status" value="1"/>
</dbReference>
<dbReference type="InterPro" id="IPR001576">
    <property type="entry name" value="Phosphoglycerate_kinase"/>
</dbReference>
<dbReference type="InterPro" id="IPR015824">
    <property type="entry name" value="Phosphoglycerate_kinase_N"/>
</dbReference>
<dbReference type="InterPro" id="IPR036043">
    <property type="entry name" value="Phosphoglycerate_kinase_sf"/>
</dbReference>
<dbReference type="PANTHER" id="PTHR11406">
    <property type="entry name" value="PHOSPHOGLYCERATE KINASE"/>
    <property type="match status" value="1"/>
</dbReference>
<dbReference type="PANTHER" id="PTHR11406:SF23">
    <property type="entry name" value="PHOSPHOGLYCERATE KINASE 1, CHLOROPLASTIC-RELATED"/>
    <property type="match status" value="1"/>
</dbReference>
<dbReference type="Pfam" id="PF00162">
    <property type="entry name" value="PGK"/>
    <property type="match status" value="1"/>
</dbReference>
<dbReference type="PIRSF" id="PIRSF000724">
    <property type="entry name" value="Pgk"/>
    <property type="match status" value="1"/>
</dbReference>
<dbReference type="PRINTS" id="PR00477">
    <property type="entry name" value="PHGLYCKINASE"/>
</dbReference>
<dbReference type="SUPFAM" id="SSF53748">
    <property type="entry name" value="Phosphoglycerate kinase"/>
    <property type="match status" value="1"/>
</dbReference>
<feature type="chain" id="PRO_0000146029" description="Phosphoglycerate kinase">
    <location>
        <begin position="1"/>
        <end position="419"/>
    </location>
</feature>
<feature type="binding site" evidence="1">
    <location>
        <begin position="20"/>
        <end position="22"/>
    </location>
    <ligand>
        <name>substrate</name>
    </ligand>
</feature>
<feature type="binding site" evidence="1">
    <location>
        <position position="35"/>
    </location>
    <ligand>
        <name>substrate</name>
    </ligand>
</feature>
<feature type="binding site" evidence="1">
    <location>
        <begin position="59"/>
        <end position="62"/>
    </location>
    <ligand>
        <name>substrate</name>
    </ligand>
</feature>
<feature type="binding site" evidence="1">
    <location>
        <position position="136"/>
    </location>
    <ligand>
        <name>substrate</name>
    </ligand>
</feature>
<feature type="binding site" evidence="1">
    <location>
        <position position="173"/>
    </location>
    <ligand>
        <name>substrate</name>
    </ligand>
</feature>
<feature type="binding site" evidence="1">
    <location>
        <position position="224"/>
    </location>
    <ligand>
        <name>ATP</name>
        <dbReference type="ChEBI" id="CHEBI:30616"/>
    </ligand>
</feature>
<feature type="binding site" evidence="1">
    <location>
        <position position="315"/>
    </location>
    <ligand>
        <name>ATP</name>
        <dbReference type="ChEBI" id="CHEBI:30616"/>
    </ligand>
</feature>
<feature type="binding site" evidence="1">
    <location>
        <position position="346"/>
    </location>
    <ligand>
        <name>ATP</name>
        <dbReference type="ChEBI" id="CHEBI:30616"/>
    </ligand>
</feature>
<feature type="binding site" evidence="1">
    <location>
        <begin position="375"/>
        <end position="378"/>
    </location>
    <ligand>
        <name>ATP</name>
        <dbReference type="ChEBI" id="CHEBI:30616"/>
    </ligand>
</feature>
<comment type="catalytic activity">
    <reaction evidence="1">
        <text>(2R)-3-phosphoglycerate + ATP = (2R)-3-phospho-glyceroyl phosphate + ADP</text>
        <dbReference type="Rhea" id="RHEA:14801"/>
        <dbReference type="ChEBI" id="CHEBI:30616"/>
        <dbReference type="ChEBI" id="CHEBI:57604"/>
        <dbReference type="ChEBI" id="CHEBI:58272"/>
        <dbReference type="ChEBI" id="CHEBI:456216"/>
        <dbReference type="EC" id="2.7.2.3"/>
    </reaction>
</comment>
<comment type="pathway">
    <text evidence="1">Carbohydrate degradation; glycolysis; pyruvate from D-glyceraldehyde 3-phosphate: step 2/5.</text>
</comment>
<comment type="subunit">
    <text evidence="1">Monomer.</text>
</comment>
<comment type="subcellular location">
    <subcellularLocation>
        <location evidence="1">Cytoplasm</location>
    </subcellularLocation>
</comment>
<comment type="similarity">
    <text evidence="1">Belongs to the phosphoglycerate kinase family.</text>
</comment>
<gene>
    <name evidence="1" type="primary">pgk</name>
    <name type="ordered locus">TDE_1715</name>
</gene>
<proteinExistence type="inferred from homology"/>
<protein>
    <recommendedName>
        <fullName evidence="1">Phosphoglycerate kinase</fullName>
        <ecNumber evidence="1">2.7.2.3</ecNumber>
    </recommendedName>
</protein>
<sequence>MIKTVKDVNLKDKRIIMRVDFNVPMKDGVVQDDTRIRAALPTIKYILEQGARSLVLMSHLGDPSKDAKKAKEKAEKDGKPFDEEAYINGKHRMKPVAEYLSGLLKLPVDFAPSCMGQLERVKALPQGGILMLENTRFHKEETSKEKAEQQILAKELSLYGDIYVNDAFGTAHRSHASTAEIANFVNTRVAGFLMEKEIKYLEPMLNNPAKPMTAIIGGAKVSSKIAVLESLLKNASSLIIGGGMAYTFLKVQGKKIGKSLFEEDFMDTAKNLLDKAEKQGVKIILPVDHICSETFSPNAEAVLVESTDIPDNLMGMDVGPKTLALYKEIILSSKSIVWNGPVGVFEFEAFSKGTEETARLVAAATEKGALTIVGGGDSVAAVNKFNLADKMSHVSTGGGASLEFLEGKVLPGIACLDTI</sequence>
<organism>
    <name type="scientific">Treponema denticola (strain ATCC 35405 / DSM 14222 / CIP 103919 / JCM 8153 / KCTC 15104)</name>
    <dbReference type="NCBI Taxonomy" id="243275"/>
    <lineage>
        <taxon>Bacteria</taxon>
        <taxon>Pseudomonadati</taxon>
        <taxon>Spirochaetota</taxon>
        <taxon>Spirochaetia</taxon>
        <taxon>Spirochaetales</taxon>
        <taxon>Treponemataceae</taxon>
        <taxon>Treponema</taxon>
    </lineage>
</organism>
<accession>P62421</accession>